<comment type="function">
    <text evidence="4">Transcriptional repressor. Specifically binds DNA and probably acts by recruiting chromatin remodeling multiprotein complexes.</text>
</comment>
<comment type="subcellular location">
    <subcellularLocation>
        <location evidence="4">Cytoplasm</location>
    </subcellularLocation>
    <subcellularLocation>
        <location evidence="5">Nucleus</location>
        <location evidence="5">Nucleoplasm</location>
    </subcellularLocation>
    <text evidence="5">In skeletal myofibers, highly enriched in subsynaptic nuclei at the neuromuscular junctions.</text>
</comment>
<comment type="alternative products">
    <event type="alternative splicing"/>
    <isoform>
        <id>Q811H0-1</id>
        <name>1</name>
        <sequence type="displayed"/>
    </isoform>
    <isoform>
        <id>Q811H0-2</id>
        <name>2</name>
        <sequence type="described" ref="VSP_038770"/>
    </isoform>
</comment>
<comment type="tissue specificity">
    <text evidence="4 5">Highly expressed in skeletal muscle and ovary (at protein level). Low expression in brain, lung, spleen, liver and heart (at protein level). Not detected in kidney and intestines (at protein level). Also observed in testis and, at lower levels, in stomach and nervous system.</text>
</comment>
<comment type="similarity">
    <text evidence="7">Belongs to the krueppel C2H2-type zinc-finger protein family. ZBTB18 subfamily.</text>
</comment>
<comment type="sequence caution" evidence="7">
    <conflict type="erroneous initiation">
        <sequence resource="EMBL-CDS" id="AAH46387"/>
    </conflict>
    <text>Extended N-terminus.</text>
</comment>
<keyword id="KW-0025">Alternative splicing</keyword>
<keyword id="KW-0963">Cytoplasm</keyword>
<keyword id="KW-0238">DNA-binding</keyword>
<keyword id="KW-0479">Metal-binding</keyword>
<keyword id="KW-0539">Nucleus</keyword>
<keyword id="KW-1185">Reference proteome</keyword>
<keyword id="KW-0677">Repeat</keyword>
<keyword id="KW-0678">Repressor</keyword>
<keyword id="KW-0804">Transcription</keyword>
<keyword id="KW-0805">Transcription regulation</keyword>
<keyword id="KW-0862">Zinc</keyword>
<keyword id="KW-0863">Zinc-finger</keyword>
<gene>
    <name type="primary">Zbtb42</name>
</gene>
<accession>Q811H0</accession>
<organism>
    <name type="scientific">Mus musculus</name>
    <name type="common">Mouse</name>
    <dbReference type="NCBI Taxonomy" id="10090"/>
    <lineage>
        <taxon>Eukaryota</taxon>
        <taxon>Metazoa</taxon>
        <taxon>Chordata</taxon>
        <taxon>Craniata</taxon>
        <taxon>Vertebrata</taxon>
        <taxon>Euteleostomi</taxon>
        <taxon>Mammalia</taxon>
        <taxon>Eutheria</taxon>
        <taxon>Euarchontoglires</taxon>
        <taxon>Glires</taxon>
        <taxon>Rodentia</taxon>
        <taxon>Myomorpha</taxon>
        <taxon>Muroidea</taxon>
        <taxon>Muridae</taxon>
        <taxon>Murinae</taxon>
        <taxon>Mus</taxon>
        <taxon>Mus</taxon>
    </lineage>
</organism>
<feature type="chain" id="PRO_0000391930" description="Zinc finger and BTB domain-containing protein 42">
    <location>
        <begin position="1"/>
        <end position="420"/>
    </location>
</feature>
<feature type="domain" description="BTB" evidence="1">
    <location>
        <begin position="24"/>
        <end position="92"/>
    </location>
</feature>
<feature type="zinc finger region" description="C2H2-type 1" evidence="2">
    <location>
        <begin position="292"/>
        <end position="314"/>
    </location>
</feature>
<feature type="zinc finger region" description="C2H2-type 2" evidence="2">
    <location>
        <begin position="332"/>
        <end position="354"/>
    </location>
</feature>
<feature type="zinc finger region" description="C2H2-type 3" evidence="2">
    <location>
        <begin position="360"/>
        <end position="382"/>
    </location>
</feature>
<feature type="zinc finger region" description="C2H2-type 4" evidence="2">
    <location>
        <begin position="388"/>
        <end position="411"/>
    </location>
</feature>
<feature type="region of interest" description="Disordered" evidence="3">
    <location>
        <begin position="127"/>
        <end position="204"/>
    </location>
</feature>
<feature type="region of interest" description="Disordered" evidence="3">
    <location>
        <begin position="222"/>
        <end position="247"/>
    </location>
</feature>
<feature type="compositionally biased region" description="Low complexity" evidence="3">
    <location>
        <begin position="227"/>
        <end position="241"/>
    </location>
</feature>
<feature type="splice variant" id="VSP_038770" description="In isoform 2." evidence="6">
    <original>MEFPEHGVRLLGRLRQQRELGFLCDCTVLVGDARFPAHRAVLAACSVYFHLFYRDQPASSRDTVRLNGDIVTVPAFSRLLDFMYEGRLDLHNLPVEDVLAAASYLHMYDIVKVCKGRLRKKDPDLETRTLGTELPGQPPHPLPSWSPAFCQAAPKAKHPSLGVKATHPLPTFGPPSWQ</original>
    <variation>MTSSRSARADSERRTQIWRP</variation>
    <location>
        <begin position="1"/>
        <end position="178"/>
    </location>
</feature>
<feature type="sequence conflict" description="In Ref. 2; AAH46387." evidence="7" ref="2">
    <original>P</original>
    <variation>R</variation>
    <location>
        <position position="197"/>
    </location>
</feature>
<feature type="sequence conflict" description="In Ref. 2; AAH46387." evidence="7" ref="2">
    <original>G</original>
    <variation>S</variation>
    <location>
        <position position="254"/>
    </location>
</feature>
<feature type="sequence conflict" description="In Ref. 2; AAH46387." evidence="7" ref="2">
    <original>S</original>
    <variation>T</variation>
    <location>
        <position position="330"/>
    </location>
</feature>
<dbReference type="EMBL" id="AC124373">
    <property type="status" value="NOT_ANNOTATED_CDS"/>
    <property type="molecule type" value="Genomic_DNA"/>
</dbReference>
<dbReference type="EMBL" id="BC046387">
    <property type="protein sequence ID" value="AAH46387.1"/>
    <property type="status" value="ALT_INIT"/>
    <property type="molecule type" value="mRNA"/>
</dbReference>
<dbReference type="CCDS" id="CCDS49190.1">
    <molecule id="Q811H0-1"/>
</dbReference>
<dbReference type="RefSeq" id="NP_001093930.1">
    <molecule id="Q811H0-1"/>
    <property type="nucleotide sequence ID" value="NM_001100460.1"/>
</dbReference>
<dbReference type="SMR" id="Q811H0"/>
<dbReference type="FunCoup" id="Q811H0">
    <property type="interactions" value="137"/>
</dbReference>
<dbReference type="STRING" id="10090.ENSMUSP00000133152"/>
<dbReference type="PhosphoSitePlus" id="Q811H0"/>
<dbReference type="PaxDb" id="10090-ENSMUSP00000133152"/>
<dbReference type="ProteomicsDB" id="275127">
    <molecule id="Q811H0-1"/>
</dbReference>
<dbReference type="ProteomicsDB" id="275128">
    <molecule id="Q811H0-2"/>
</dbReference>
<dbReference type="Antibodypedia" id="58775">
    <property type="antibodies" value="64 antibodies from 10 providers"/>
</dbReference>
<dbReference type="Ensembl" id="ENSMUST00000169593.2">
    <molecule id="Q811H0-1"/>
    <property type="protein sequence ID" value="ENSMUSP00000133152.2"/>
    <property type="gene ID" value="ENSMUSG00000037638.6"/>
</dbReference>
<dbReference type="GeneID" id="382639"/>
<dbReference type="KEGG" id="mmu:382639"/>
<dbReference type="UCSC" id="uc007pez.2">
    <molecule id="Q811H0-2"/>
    <property type="organism name" value="mouse"/>
</dbReference>
<dbReference type="UCSC" id="uc007pfa.2">
    <molecule id="Q811H0-1"/>
    <property type="organism name" value="mouse"/>
</dbReference>
<dbReference type="AGR" id="MGI:3644133"/>
<dbReference type="CTD" id="100128927"/>
<dbReference type="MGI" id="MGI:3644133">
    <property type="gene designation" value="Zbtb42"/>
</dbReference>
<dbReference type="VEuPathDB" id="HostDB:ENSMUSG00000037638"/>
<dbReference type="eggNOG" id="KOG1721">
    <property type="taxonomic scope" value="Eukaryota"/>
</dbReference>
<dbReference type="GeneTree" id="ENSGT00940000163959"/>
<dbReference type="HOGENOM" id="CLU_034521_0_0_1"/>
<dbReference type="InParanoid" id="Q811H0"/>
<dbReference type="OMA" id="HPPCILQ"/>
<dbReference type="OrthoDB" id="4748970at2759"/>
<dbReference type="PhylomeDB" id="Q811H0"/>
<dbReference type="TreeFam" id="TF337437"/>
<dbReference type="BioGRID-ORCS" id="382639">
    <property type="hits" value="5 hits in 78 CRISPR screens"/>
</dbReference>
<dbReference type="ChiTaRS" id="Zbtb42">
    <property type="organism name" value="mouse"/>
</dbReference>
<dbReference type="PRO" id="PR:Q811H0"/>
<dbReference type="Proteomes" id="UP000000589">
    <property type="component" value="Chromosome 12"/>
</dbReference>
<dbReference type="RNAct" id="Q811H0">
    <property type="molecule type" value="protein"/>
</dbReference>
<dbReference type="Bgee" id="ENSMUSG00000037638">
    <property type="expression patterns" value="Expressed in dorsal pancreas and 145 other cell types or tissues"/>
</dbReference>
<dbReference type="ExpressionAtlas" id="Q811H0">
    <property type="expression patterns" value="baseline and differential"/>
</dbReference>
<dbReference type="GO" id="GO:0005737">
    <property type="term" value="C:cytoplasm"/>
    <property type="evidence" value="ECO:0000314"/>
    <property type="project" value="MGI"/>
</dbReference>
<dbReference type="GO" id="GO:0005654">
    <property type="term" value="C:nucleoplasm"/>
    <property type="evidence" value="ECO:0000314"/>
    <property type="project" value="UniProtKB"/>
</dbReference>
<dbReference type="GO" id="GO:0005634">
    <property type="term" value="C:nucleus"/>
    <property type="evidence" value="ECO:0000314"/>
    <property type="project" value="UniProtKB"/>
</dbReference>
<dbReference type="GO" id="GO:0005886">
    <property type="term" value="C:plasma membrane"/>
    <property type="evidence" value="ECO:0007669"/>
    <property type="project" value="Ensembl"/>
</dbReference>
<dbReference type="GO" id="GO:0003677">
    <property type="term" value="F:DNA binding"/>
    <property type="evidence" value="ECO:0007669"/>
    <property type="project" value="UniProtKB-KW"/>
</dbReference>
<dbReference type="GO" id="GO:0008270">
    <property type="term" value="F:zinc ion binding"/>
    <property type="evidence" value="ECO:0007669"/>
    <property type="project" value="UniProtKB-KW"/>
</dbReference>
<dbReference type="GO" id="GO:0007517">
    <property type="term" value="P:muscle organ development"/>
    <property type="evidence" value="ECO:0000250"/>
    <property type="project" value="UniProtKB"/>
</dbReference>
<dbReference type="GO" id="GO:0000122">
    <property type="term" value="P:negative regulation of transcription by RNA polymerase II"/>
    <property type="evidence" value="ECO:0000314"/>
    <property type="project" value="MGI"/>
</dbReference>
<dbReference type="CDD" id="cd18956">
    <property type="entry name" value="BTB_POZ_ZBTB42"/>
    <property type="match status" value="1"/>
</dbReference>
<dbReference type="FunFam" id="3.30.160.60:FF:000114">
    <property type="entry name" value="Zinc finger and BTB domain-containing protein 18"/>
    <property type="match status" value="1"/>
</dbReference>
<dbReference type="FunFam" id="3.30.160.60:FF:000220">
    <property type="entry name" value="Zinc finger and BTB domain-containing protein 18"/>
    <property type="match status" value="1"/>
</dbReference>
<dbReference type="FunFam" id="3.30.710.10:FF:000021">
    <property type="entry name" value="Zinc finger and BTB domain-containing protein 18"/>
    <property type="match status" value="1"/>
</dbReference>
<dbReference type="FunFam" id="3.30.160.60:FF:000096">
    <property type="entry name" value="Zinc finger and BTB domain-containing protein 18 isoform 1"/>
    <property type="match status" value="1"/>
</dbReference>
<dbReference type="Gene3D" id="3.30.160.60">
    <property type="entry name" value="Classic Zinc Finger"/>
    <property type="match status" value="3"/>
</dbReference>
<dbReference type="Gene3D" id="3.30.710.10">
    <property type="entry name" value="Potassium Channel Kv1.1, Chain A"/>
    <property type="match status" value="1"/>
</dbReference>
<dbReference type="InterPro" id="IPR000210">
    <property type="entry name" value="BTB/POZ_dom"/>
</dbReference>
<dbReference type="InterPro" id="IPR011333">
    <property type="entry name" value="SKP1/BTB/POZ_sf"/>
</dbReference>
<dbReference type="InterPro" id="IPR036236">
    <property type="entry name" value="Znf_C2H2_sf"/>
</dbReference>
<dbReference type="InterPro" id="IPR013087">
    <property type="entry name" value="Znf_C2H2_type"/>
</dbReference>
<dbReference type="PANTHER" id="PTHR24394:SF20">
    <property type="entry name" value="ZINC FINGER AND BTB DOMAIN-CONTAINING PROTEIN 42"/>
    <property type="match status" value="1"/>
</dbReference>
<dbReference type="PANTHER" id="PTHR24394">
    <property type="entry name" value="ZINC FINGER PROTEIN"/>
    <property type="match status" value="1"/>
</dbReference>
<dbReference type="Pfam" id="PF00651">
    <property type="entry name" value="BTB"/>
    <property type="match status" value="1"/>
</dbReference>
<dbReference type="Pfam" id="PF00096">
    <property type="entry name" value="zf-C2H2"/>
    <property type="match status" value="2"/>
</dbReference>
<dbReference type="Pfam" id="PF13894">
    <property type="entry name" value="zf-C2H2_4"/>
    <property type="match status" value="1"/>
</dbReference>
<dbReference type="SMART" id="SM00225">
    <property type="entry name" value="BTB"/>
    <property type="match status" value="1"/>
</dbReference>
<dbReference type="SMART" id="SM00355">
    <property type="entry name" value="ZnF_C2H2"/>
    <property type="match status" value="4"/>
</dbReference>
<dbReference type="SUPFAM" id="SSF57667">
    <property type="entry name" value="beta-beta-alpha zinc fingers"/>
    <property type="match status" value="2"/>
</dbReference>
<dbReference type="SUPFAM" id="SSF54695">
    <property type="entry name" value="POZ domain"/>
    <property type="match status" value="1"/>
</dbReference>
<dbReference type="PROSITE" id="PS50097">
    <property type="entry name" value="BTB"/>
    <property type="match status" value="1"/>
</dbReference>
<dbReference type="PROSITE" id="PS00028">
    <property type="entry name" value="ZINC_FINGER_C2H2_1"/>
    <property type="match status" value="4"/>
</dbReference>
<dbReference type="PROSITE" id="PS50157">
    <property type="entry name" value="ZINC_FINGER_C2H2_2"/>
    <property type="match status" value="4"/>
</dbReference>
<evidence type="ECO:0000255" key="1">
    <source>
        <dbReference type="PROSITE-ProRule" id="PRU00037"/>
    </source>
</evidence>
<evidence type="ECO:0000255" key="2">
    <source>
        <dbReference type="PROSITE-ProRule" id="PRU00042"/>
    </source>
</evidence>
<evidence type="ECO:0000256" key="3">
    <source>
        <dbReference type="SAM" id="MobiDB-lite"/>
    </source>
</evidence>
<evidence type="ECO:0000269" key="4">
    <source>
    </source>
</evidence>
<evidence type="ECO:0000269" key="5">
    <source>
    </source>
</evidence>
<evidence type="ECO:0000303" key="6">
    <source>
    </source>
</evidence>
<evidence type="ECO:0000305" key="7"/>
<proteinExistence type="evidence at protein level"/>
<reference key="1">
    <citation type="journal article" date="2009" name="PLoS Biol.">
        <title>Lineage-specific biology revealed by a finished genome assembly of the mouse.</title>
        <authorList>
            <person name="Church D.M."/>
            <person name="Goodstadt L."/>
            <person name="Hillier L.W."/>
            <person name="Zody M.C."/>
            <person name="Goldstein S."/>
            <person name="She X."/>
            <person name="Bult C.J."/>
            <person name="Agarwala R."/>
            <person name="Cherry J.L."/>
            <person name="DiCuccio M."/>
            <person name="Hlavina W."/>
            <person name="Kapustin Y."/>
            <person name="Meric P."/>
            <person name="Maglott D."/>
            <person name="Birtle Z."/>
            <person name="Marques A.C."/>
            <person name="Graves T."/>
            <person name="Zhou S."/>
            <person name="Teague B."/>
            <person name="Potamousis K."/>
            <person name="Churas C."/>
            <person name="Place M."/>
            <person name="Herschleb J."/>
            <person name="Runnheim R."/>
            <person name="Forrest D."/>
            <person name="Amos-Landgraf J."/>
            <person name="Schwartz D.C."/>
            <person name="Cheng Z."/>
            <person name="Lindblad-Toh K."/>
            <person name="Eichler E.E."/>
            <person name="Ponting C.P."/>
        </authorList>
    </citation>
    <scope>NUCLEOTIDE SEQUENCE [LARGE SCALE GENOMIC DNA]</scope>
    <source>
        <strain>C57BL/6J</strain>
    </source>
</reference>
<reference key="2">
    <citation type="journal article" date="2004" name="Genome Res.">
        <title>The status, quality, and expansion of the NIH full-length cDNA project: the Mammalian Gene Collection (MGC).</title>
        <authorList>
            <consortium name="The MGC Project Team"/>
        </authorList>
    </citation>
    <scope>NUCLEOTIDE SEQUENCE [LARGE SCALE MRNA] (ISOFORM 2)</scope>
    <source>
        <strain>FVB/N</strain>
        <tissue>Mammary tumor</tissue>
    </source>
</reference>
<reference key="3">
    <citation type="journal article" date="2008" name="Biochem. Biophys. Res. Commun.">
        <title>Co-localization of a novel transcriptional repressor simiRP58 with RP58.</title>
        <authorList>
            <person name="Takahashi A."/>
            <person name="Hirai S."/>
            <person name="Ohtaka-Maruyama C."/>
            <person name="Miwa A."/>
            <person name="Hata Y."/>
            <person name="Okabe S."/>
            <person name="Okado H."/>
        </authorList>
    </citation>
    <scope>FUNCTION</scope>
    <scope>SUBCELLULAR LOCATION</scope>
    <scope>DNA-BINDING</scope>
    <scope>TISSUE SPECIFICITY</scope>
</reference>
<reference key="4">
    <citation type="journal article" date="2011" name="Hum. Genet.">
        <title>Characterization of the ZBTB42 gene in humans and mice.</title>
        <authorList>
            <person name="Devaney S.A."/>
            <person name="Mate S.E."/>
            <person name="Devaney J.M."/>
            <person name="Hoffman E.P."/>
        </authorList>
    </citation>
    <scope>SUBCELLULAR LOCATION</scope>
    <scope>TISSUE SPECIFICITY</scope>
</reference>
<protein>
    <recommendedName>
        <fullName>Zinc finger and BTB domain-containing protein 42</fullName>
    </recommendedName>
    <alternativeName>
        <fullName>Protein simiRP58</fullName>
    </alternativeName>
</protein>
<name>ZBT42_MOUSE</name>
<sequence>MEFPEHGVRLLGRLRQQRELGFLCDCTVLVGDARFPAHRAVLAACSVYFHLFYRDQPASSRDTVRLNGDIVTVPAFSRLLDFMYEGRLDLHNLPVEDVLAAASYLHMYDIVKVCKGRLRKKDPDLETRTLGTELPGQPPHPLPSWSPAFCQAAPKAKHPSLGVKATHPLPTFGPPSWQVAEQSSGALDLSLKPSPRPEQVHPPCRLQTSLCSSVQQVAQPLVKAEQDSFSEQDSSSPQSADRSPPPVCASAAQGLAVDLEPLHIEGTGSQQLGLPAEPVLDSEELGPSRHLCICPLCCKLFPSTHALQLHLSAHFRERDSVRARLSPEGSVPTCPLCSKTFSCTYTLKRHERTHSGEKPYTCVQCGKSFQYSHNLSRHAVVHTREKPHACRWCERRFTQSGDLYRHVRKFHYGLVKPLLV</sequence>